<sequence>MTDKEGQEVKDAPSIEQYTALKDQLTQQILKKQELDSKLSKLEDSIYEKENEYFNESVYGNIVKGFQNFTKTNTGGLNKRRITYTDDDHIFSLSSVNYIKTIMKRQGVNSNGGRNEDLDDYEDSIDPNNGNAGGNTPNTTGTNNQSASQANSNSNQSTPGRKRKIRTIDD</sequence>
<name>EAF6_DEBHA</name>
<reference key="1">
    <citation type="journal article" date="2004" name="Nature">
        <title>Genome evolution in yeasts.</title>
        <authorList>
            <person name="Dujon B."/>
            <person name="Sherman D."/>
            <person name="Fischer G."/>
            <person name="Durrens P."/>
            <person name="Casaregola S."/>
            <person name="Lafontaine I."/>
            <person name="de Montigny J."/>
            <person name="Marck C."/>
            <person name="Neuveglise C."/>
            <person name="Talla E."/>
            <person name="Goffard N."/>
            <person name="Frangeul L."/>
            <person name="Aigle M."/>
            <person name="Anthouard V."/>
            <person name="Babour A."/>
            <person name="Barbe V."/>
            <person name="Barnay S."/>
            <person name="Blanchin S."/>
            <person name="Beckerich J.-M."/>
            <person name="Beyne E."/>
            <person name="Bleykasten C."/>
            <person name="Boisrame A."/>
            <person name="Boyer J."/>
            <person name="Cattolico L."/>
            <person name="Confanioleri F."/>
            <person name="de Daruvar A."/>
            <person name="Despons L."/>
            <person name="Fabre E."/>
            <person name="Fairhead C."/>
            <person name="Ferry-Dumazet H."/>
            <person name="Groppi A."/>
            <person name="Hantraye F."/>
            <person name="Hennequin C."/>
            <person name="Jauniaux N."/>
            <person name="Joyet P."/>
            <person name="Kachouri R."/>
            <person name="Kerrest A."/>
            <person name="Koszul R."/>
            <person name="Lemaire M."/>
            <person name="Lesur I."/>
            <person name="Ma L."/>
            <person name="Muller H."/>
            <person name="Nicaud J.-M."/>
            <person name="Nikolski M."/>
            <person name="Oztas S."/>
            <person name="Ozier-Kalogeropoulos O."/>
            <person name="Pellenz S."/>
            <person name="Potier S."/>
            <person name="Richard G.-F."/>
            <person name="Straub M.-L."/>
            <person name="Suleau A."/>
            <person name="Swennen D."/>
            <person name="Tekaia F."/>
            <person name="Wesolowski-Louvel M."/>
            <person name="Westhof E."/>
            <person name="Wirth B."/>
            <person name="Zeniou-Meyer M."/>
            <person name="Zivanovic Y."/>
            <person name="Bolotin-Fukuhara M."/>
            <person name="Thierry A."/>
            <person name="Bouchier C."/>
            <person name="Caudron B."/>
            <person name="Scarpelli C."/>
            <person name="Gaillardin C."/>
            <person name="Weissenbach J."/>
            <person name="Wincker P."/>
            <person name="Souciet J.-L."/>
        </authorList>
    </citation>
    <scope>NUCLEOTIDE SEQUENCE [LARGE SCALE GENOMIC DNA]</scope>
    <source>
        <strain>ATCC 36239 / CBS 767 / BCRC 21394 / JCM 1990 / NBRC 0083 / IGC 2968</strain>
    </source>
</reference>
<accession>Q6BI21</accession>
<feature type="chain" id="PRO_0000086896" description="Chromatin modification-related protein EAF6">
    <location>
        <begin position="1"/>
        <end position="170"/>
    </location>
</feature>
<feature type="region of interest" description="Disordered" evidence="3">
    <location>
        <begin position="107"/>
        <end position="170"/>
    </location>
</feature>
<feature type="coiled-coil region" evidence="2">
    <location>
        <begin position="14"/>
        <end position="53"/>
    </location>
</feature>
<feature type="compositionally biased region" description="Low complexity" evidence="3">
    <location>
        <begin position="127"/>
        <end position="157"/>
    </location>
</feature>
<feature type="compositionally biased region" description="Basic residues" evidence="3">
    <location>
        <begin position="160"/>
        <end position="170"/>
    </location>
</feature>
<evidence type="ECO:0000250" key="1"/>
<evidence type="ECO:0000255" key="2"/>
<evidence type="ECO:0000256" key="3">
    <source>
        <dbReference type="SAM" id="MobiDB-lite"/>
    </source>
</evidence>
<evidence type="ECO:0000305" key="4"/>
<protein>
    <recommendedName>
        <fullName>Chromatin modification-related protein EAF6</fullName>
    </recommendedName>
</protein>
<proteinExistence type="inferred from homology"/>
<comment type="function">
    <text evidence="1">Component of the NuA4 histone acetyltransferase complex which is involved in transcriptional activation of selected genes principally by acetylation of nucleosomal histone H4 and H2A. The NuA4 complex is also involved in DNA repair (By similarity).</text>
</comment>
<comment type="subunit">
    <text evidence="1">Component of the NuA4 histone acetyltransferase complex.</text>
</comment>
<comment type="subcellular location">
    <subcellularLocation>
        <location evidence="1">Nucleus</location>
    </subcellularLocation>
</comment>
<comment type="similarity">
    <text evidence="4">Belongs to the EAF6 family.</text>
</comment>
<dbReference type="EMBL" id="CR382139">
    <property type="protein sequence ID" value="CAG90636.1"/>
    <property type="molecule type" value="Genomic_DNA"/>
</dbReference>
<dbReference type="RefSeq" id="XP_462150.1">
    <property type="nucleotide sequence ID" value="XM_462150.1"/>
</dbReference>
<dbReference type="SMR" id="Q6BI21"/>
<dbReference type="FunCoup" id="Q6BI21">
    <property type="interactions" value="110"/>
</dbReference>
<dbReference type="STRING" id="284592.Q6BI21"/>
<dbReference type="GeneID" id="2905064"/>
<dbReference type="KEGG" id="dha:DEHA2G14036g"/>
<dbReference type="eggNOG" id="ENOG502SEZK">
    <property type="taxonomic scope" value="Eukaryota"/>
</dbReference>
<dbReference type="HOGENOM" id="CLU_093901_0_0_1"/>
<dbReference type="InParanoid" id="Q6BI21"/>
<dbReference type="OMA" id="QYTDDDH"/>
<dbReference type="OrthoDB" id="440324at2759"/>
<dbReference type="Proteomes" id="UP000000599">
    <property type="component" value="Chromosome G"/>
</dbReference>
<dbReference type="GO" id="GO:0000123">
    <property type="term" value="C:histone acetyltransferase complex"/>
    <property type="evidence" value="ECO:0007669"/>
    <property type="project" value="InterPro"/>
</dbReference>
<dbReference type="GO" id="GO:0005634">
    <property type="term" value="C:nucleus"/>
    <property type="evidence" value="ECO:0007669"/>
    <property type="project" value="UniProtKB-SubCell"/>
</dbReference>
<dbReference type="GO" id="GO:0006325">
    <property type="term" value="P:chromatin organization"/>
    <property type="evidence" value="ECO:0007669"/>
    <property type="project" value="UniProtKB-KW"/>
</dbReference>
<dbReference type="GO" id="GO:0006281">
    <property type="term" value="P:DNA repair"/>
    <property type="evidence" value="ECO:0007669"/>
    <property type="project" value="UniProtKB-KW"/>
</dbReference>
<dbReference type="InterPro" id="IPR015418">
    <property type="entry name" value="Eaf6"/>
</dbReference>
<dbReference type="PANTHER" id="PTHR13476">
    <property type="entry name" value="CHROMATIN MODIFICATION-RELATED PROTEIN MEAF6"/>
    <property type="match status" value="1"/>
</dbReference>
<dbReference type="Pfam" id="PF09340">
    <property type="entry name" value="NuA4"/>
    <property type="match status" value="1"/>
</dbReference>
<organism>
    <name type="scientific">Debaryomyces hansenii (strain ATCC 36239 / CBS 767 / BCRC 21394 / JCM 1990 / NBRC 0083 / IGC 2968)</name>
    <name type="common">Yeast</name>
    <name type="synonym">Torulaspora hansenii</name>
    <dbReference type="NCBI Taxonomy" id="284592"/>
    <lineage>
        <taxon>Eukaryota</taxon>
        <taxon>Fungi</taxon>
        <taxon>Dikarya</taxon>
        <taxon>Ascomycota</taxon>
        <taxon>Saccharomycotina</taxon>
        <taxon>Pichiomycetes</taxon>
        <taxon>Debaryomycetaceae</taxon>
        <taxon>Debaryomyces</taxon>
    </lineage>
</organism>
<gene>
    <name type="primary">EAF6</name>
    <name type="ordered locus">DEHA2G14036g</name>
</gene>
<keyword id="KW-0156">Chromatin regulator</keyword>
<keyword id="KW-0175">Coiled coil</keyword>
<keyword id="KW-0227">DNA damage</keyword>
<keyword id="KW-0234">DNA repair</keyword>
<keyword id="KW-0539">Nucleus</keyword>
<keyword id="KW-1185">Reference proteome</keyword>
<keyword id="KW-0804">Transcription</keyword>
<keyword id="KW-0805">Transcription regulation</keyword>